<proteinExistence type="inferred from homology"/>
<feature type="chain" id="PRO_0000103010" description="SsrA-binding protein">
    <location>
        <begin position="1"/>
        <end position="160"/>
    </location>
</feature>
<feature type="region of interest" description="Disordered" evidence="2">
    <location>
        <begin position="131"/>
        <end position="160"/>
    </location>
</feature>
<sequence>MAKLKKHPTGTIAQNKKARHDYFIEHKFEAGLVLSGWEVKSLRATKVQLVDSYVLLKDGEAWLMGCHITPLKTASTHVIADPTRTRKLLLNQRELEKLTSSVQQKGYACVALSIYWKQHLIKCEIALGKGKKEYDKRHTERERDSDRELQRAVRTKGKDD</sequence>
<organism>
    <name type="scientific">Pseudomonas syringae pv. tomato (strain ATCC BAA-871 / DC3000)</name>
    <dbReference type="NCBI Taxonomy" id="223283"/>
    <lineage>
        <taxon>Bacteria</taxon>
        <taxon>Pseudomonadati</taxon>
        <taxon>Pseudomonadota</taxon>
        <taxon>Gammaproteobacteria</taxon>
        <taxon>Pseudomonadales</taxon>
        <taxon>Pseudomonadaceae</taxon>
        <taxon>Pseudomonas</taxon>
    </lineage>
</organism>
<reference key="1">
    <citation type="journal article" date="2003" name="Proc. Natl. Acad. Sci. U.S.A.">
        <title>The complete genome sequence of the Arabidopsis and tomato pathogen Pseudomonas syringae pv. tomato DC3000.</title>
        <authorList>
            <person name="Buell C.R."/>
            <person name="Joardar V."/>
            <person name="Lindeberg M."/>
            <person name="Selengut J."/>
            <person name="Paulsen I.T."/>
            <person name="Gwinn M.L."/>
            <person name="Dodson R.J."/>
            <person name="DeBoy R.T."/>
            <person name="Durkin A.S."/>
            <person name="Kolonay J.F."/>
            <person name="Madupu R."/>
            <person name="Daugherty S.C."/>
            <person name="Brinkac L.M."/>
            <person name="Beanan M.J."/>
            <person name="Haft D.H."/>
            <person name="Nelson W.C."/>
            <person name="Davidsen T.M."/>
            <person name="Zafar N."/>
            <person name="Zhou L."/>
            <person name="Liu J."/>
            <person name="Yuan Q."/>
            <person name="Khouri H.M."/>
            <person name="Fedorova N.B."/>
            <person name="Tran B."/>
            <person name="Russell D."/>
            <person name="Berry K.J."/>
            <person name="Utterback T.R."/>
            <person name="Van Aken S.E."/>
            <person name="Feldblyum T.V."/>
            <person name="D'Ascenzo M."/>
            <person name="Deng W.-L."/>
            <person name="Ramos A.R."/>
            <person name="Alfano J.R."/>
            <person name="Cartinhour S."/>
            <person name="Chatterjee A.K."/>
            <person name="Delaney T.P."/>
            <person name="Lazarowitz S.G."/>
            <person name="Martin G.B."/>
            <person name="Schneider D.J."/>
            <person name="Tang X."/>
            <person name="Bender C.L."/>
            <person name="White O."/>
            <person name="Fraser C.M."/>
            <person name="Collmer A."/>
        </authorList>
    </citation>
    <scope>NUCLEOTIDE SEQUENCE [LARGE SCALE GENOMIC DNA]</scope>
    <source>
        <strain>ATCC BAA-871 / DC3000</strain>
    </source>
</reference>
<accession>Q87WN1</accession>
<evidence type="ECO:0000255" key="1">
    <source>
        <dbReference type="HAMAP-Rule" id="MF_00023"/>
    </source>
</evidence>
<evidence type="ECO:0000256" key="2">
    <source>
        <dbReference type="SAM" id="MobiDB-lite"/>
    </source>
</evidence>
<keyword id="KW-0963">Cytoplasm</keyword>
<keyword id="KW-1185">Reference proteome</keyword>
<keyword id="KW-0694">RNA-binding</keyword>
<gene>
    <name evidence="1" type="primary">smpB</name>
    <name type="ordered locus">PSPTO_4515</name>
</gene>
<dbReference type="EMBL" id="AE016853">
    <property type="protein sequence ID" value="AAO57963.1"/>
    <property type="molecule type" value="Genomic_DNA"/>
</dbReference>
<dbReference type="RefSeq" id="NP_794268.1">
    <property type="nucleotide sequence ID" value="NC_004578.1"/>
</dbReference>
<dbReference type="RefSeq" id="WP_003377471.1">
    <property type="nucleotide sequence ID" value="NC_004578.1"/>
</dbReference>
<dbReference type="SMR" id="Q87WN1"/>
<dbReference type="STRING" id="223283.PSPTO_4515"/>
<dbReference type="GeneID" id="61789753"/>
<dbReference type="KEGG" id="pst:PSPTO_4515"/>
<dbReference type="PATRIC" id="fig|223283.9.peg.4631"/>
<dbReference type="eggNOG" id="COG0691">
    <property type="taxonomic scope" value="Bacteria"/>
</dbReference>
<dbReference type="HOGENOM" id="CLU_108953_3_0_6"/>
<dbReference type="OrthoDB" id="9805462at2"/>
<dbReference type="PhylomeDB" id="Q87WN1"/>
<dbReference type="Proteomes" id="UP000002515">
    <property type="component" value="Chromosome"/>
</dbReference>
<dbReference type="GO" id="GO:0005829">
    <property type="term" value="C:cytosol"/>
    <property type="evidence" value="ECO:0007669"/>
    <property type="project" value="TreeGrafter"/>
</dbReference>
<dbReference type="GO" id="GO:0003723">
    <property type="term" value="F:RNA binding"/>
    <property type="evidence" value="ECO:0007669"/>
    <property type="project" value="UniProtKB-UniRule"/>
</dbReference>
<dbReference type="GO" id="GO:0070929">
    <property type="term" value="P:trans-translation"/>
    <property type="evidence" value="ECO:0007669"/>
    <property type="project" value="UniProtKB-UniRule"/>
</dbReference>
<dbReference type="CDD" id="cd09294">
    <property type="entry name" value="SmpB"/>
    <property type="match status" value="1"/>
</dbReference>
<dbReference type="Gene3D" id="2.40.280.10">
    <property type="match status" value="1"/>
</dbReference>
<dbReference type="HAMAP" id="MF_00023">
    <property type="entry name" value="SmpB"/>
    <property type="match status" value="1"/>
</dbReference>
<dbReference type="InterPro" id="IPR023620">
    <property type="entry name" value="SmpB"/>
</dbReference>
<dbReference type="InterPro" id="IPR000037">
    <property type="entry name" value="SsrA-bd_prot"/>
</dbReference>
<dbReference type="InterPro" id="IPR020081">
    <property type="entry name" value="SsrA-bd_prot_CS"/>
</dbReference>
<dbReference type="NCBIfam" id="NF003843">
    <property type="entry name" value="PRK05422.1"/>
    <property type="match status" value="1"/>
</dbReference>
<dbReference type="NCBIfam" id="TIGR00086">
    <property type="entry name" value="smpB"/>
    <property type="match status" value="1"/>
</dbReference>
<dbReference type="PANTHER" id="PTHR30308:SF2">
    <property type="entry name" value="SSRA-BINDING PROTEIN"/>
    <property type="match status" value="1"/>
</dbReference>
<dbReference type="PANTHER" id="PTHR30308">
    <property type="entry name" value="TMRNA-BINDING COMPONENT OF TRANS-TRANSLATION TAGGING COMPLEX"/>
    <property type="match status" value="1"/>
</dbReference>
<dbReference type="Pfam" id="PF01668">
    <property type="entry name" value="SmpB"/>
    <property type="match status" value="1"/>
</dbReference>
<dbReference type="SUPFAM" id="SSF74982">
    <property type="entry name" value="Small protein B (SmpB)"/>
    <property type="match status" value="1"/>
</dbReference>
<dbReference type="PROSITE" id="PS01317">
    <property type="entry name" value="SSRP"/>
    <property type="match status" value="1"/>
</dbReference>
<comment type="function">
    <text evidence="1">Required for rescue of stalled ribosomes mediated by trans-translation. Binds to transfer-messenger RNA (tmRNA), required for stable association of tmRNA with ribosomes. tmRNA and SmpB together mimic tRNA shape, replacing the anticodon stem-loop with SmpB. tmRNA is encoded by the ssrA gene; the 2 termini fold to resemble tRNA(Ala) and it encodes a 'tag peptide', a short internal open reading frame. During trans-translation Ala-aminoacylated tmRNA acts like a tRNA, entering the A-site of stalled ribosomes, displacing the stalled mRNA. The ribosome then switches to translate the ORF on the tmRNA; the nascent peptide is terminated with the 'tag peptide' encoded by the tmRNA and targeted for degradation. The ribosome is freed to recommence translation, which seems to be the essential function of trans-translation.</text>
</comment>
<comment type="subcellular location">
    <subcellularLocation>
        <location evidence="1">Cytoplasm</location>
    </subcellularLocation>
    <text evidence="1">The tmRNA-SmpB complex associates with stalled 70S ribosomes.</text>
</comment>
<comment type="similarity">
    <text evidence="1">Belongs to the SmpB family.</text>
</comment>
<protein>
    <recommendedName>
        <fullName evidence="1">SsrA-binding protein</fullName>
    </recommendedName>
    <alternativeName>
        <fullName evidence="1">Small protein B</fullName>
    </alternativeName>
</protein>
<name>SSRP_PSESM</name>